<comment type="function">
    <text evidence="1">Could be involved in insertion of integral membrane proteins into the membrane.</text>
</comment>
<comment type="subcellular location">
    <subcellularLocation>
        <location evidence="1">Cell inner membrane</location>
        <topology evidence="1">Peripheral membrane protein</topology>
        <orientation evidence="1">Cytoplasmic side</orientation>
    </subcellularLocation>
</comment>
<comment type="similarity">
    <text evidence="1">Belongs to the UPF0161 family.</text>
</comment>
<proteinExistence type="inferred from homology"/>
<protein>
    <recommendedName>
        <fullName evidence="1">Putative membrane protein insertion efficiency factor</fullName>
    </recommendedName>
</protein>
<accession>B0VQP6</accession>
<keyword id="KW-0997">Cell inner membrane</keyword>
<keyword id="KW-1003">Cell membrane</keyword>
<keyword id="KW-0472">Membrane</keyword>
<reference key="1">
    <citation type="journal article" date="2008" name="PLoS ONE">
        <title>Comparative analysis of Acinetobacters: three genomes for three lifestyles.</title>
        <authorList>
            <person name="Vallenet D."/>
            <person name="Nordmann P."/>
            <person name="Barbe V."/>
            <person name="Poirel L."/>
            <person name="Mangenot S."/>
            <person name="Bataille E."/>
            <person name="Dossat C."/>
            <person name="Gas S."/>
            <person name="Kreimeyer A."/>
            <person name="Lenoble P."/>
            <person name="Oztas S."/>
            <person name="Poulain J."/>
            <person name="Segurens B."/>
            <person name="Robert C."/>
            <person name="Abergel C."/>
            <person name="Claverie J.-M."/>
            <person name="Raoult D."/>
            <person name="Medigue C."/>
            <person name="Weissenbach J."/>
            <person name="Cruveiller S."/>
        </authorList>
    </citation>
    <scope>NUCLEOTIDE SEQUENCE [LARGE SCALE GENOMIC DNA]</scope>
    <source>
        <strain>SDF</strain>
    </source>
</reference>
<evidence type="ECO:0000255" key="1">
    <source>
        <dbReference type="HAMAP-Rule" id="MF_00386"/>
    </source>
</evidence>
<organism>
    <name type="scientific">Acinetobacter baumannii (strain SDF)</name>
    <dbReference type="NCBI Taxonomy" id="509170"/>
    <lineage>
        <taxon>Bacteria</taxon>
        <taxon>Pseudomonadati</taxon>
        <taxon>Pseudomonadota</taxon>
        <taxon>Gammaproteobacteria</taxon>
        <taxon>Moraxellales</taxon>
        <taxon>Moraxellaceae</taxon>
        <taxon>Acinetobacter</taxon>
        <taxon>Acinetobacter calcoaceticus/baumannii complex</taxon>
    </lineage>
</organism>
<name>YIDD_ACIBS</name>
<gene>
    <name type="ordered locus">ABSDF3681</name>
</gene>
<feature type="chain" id="PRO_1000122609" description="Putative membrane protein insertion efficiency factor">
    <location>
        <begin position="1"/>
        <end position="106"/>
    </location>
</feature>
<dbReference type="EMBL" id="CU468230">
    <property type="protein sequence ID" value="CAP02933.1"/>
    <property type="molecule type" value="Genomic_DNA"/>
</dbReference>
<dbReference type="KEGG" id="abm:ABSDF3681"/>
<dbReference type="HOGENOM" id="CLU_144811_2_2_6"/>
<dbReference type="BioCyc" id="ABAU509170:GCL9-3038-MONOMER"/>
<dbReference type="Proteomes" id="UP000001741">
    <property type="component" value="Chromosome"/>
</dbReference>
<dbReference type="GO" id="GO:0005886">
    <property type="term" value="C:plasma membrane"/>
    <property type="evidence" value="ECO:0007669"/>
    <property type="project" value="UniProtKB-SubCell"/>
</dbReference>
<dbReference type="HAMAP" id="MF_00386">
    <property type="entry name" value="UPF0161_YidD"/>
    <property type="match status" value="1"/>
</dbReference>
<dbReference type="InterPro" id="IPR002696">
    <property type="entry name" value="Membr_insert_effic_factor_YidD"/>
</dbReference>
<dbReference type="NCBIfam" id="TIGR00278">
    <property type="entry name" value="membrane protein insertion efficiency factor YidD"/>
    <property type="match status" value="1"/>
</dbReference>
<dbReference type="PANTHER" id="PTHR33383">
    <property type="entry name" value="MEMBRANE PROTEIN INSERTION EFFICIENCY FACTOR-RELATED"/>
    <property type="match status" value="1"/>
</dbReference>
<dbReference type="PANTHER" id="PTHR33383:SF1">
    <property type="entry name" value="MEMBRANE PROTEIN INSERTION EFFICIENCY FACTOR-RELATED"/>
    <property type="match status" value="1"/>
</dbReference>
<dbReference type="Pfam" id="PF01809">
    <property type="entry name" value="YidD"/>
    <property type="match status" value="1"/>
</dbReference>
<dbReference type="SMART" id="SM01234">
    <property type="entry name" value="Haemolytic"/>
    <property type="match status" value="1"/>
</dbReference>
<sequence length="106" mass="12239">MVRILRWFIRLYQIAISPLLGPRCRYIPTCSQYALEALQTHGAIKGVWLSSKRICRCHPWGGSGYDPVPLKAIRFISFHQIDSQTHHVAVPFRDRLMKQNLSNHLG</sequence>